<comment type="function">
    <text evidence="1">Plays an important role in the de novo pathway of purine nucleotide biosynthesis. Catalyzes the first committed step in the biosynthesis of AMP from IMP.</text>
</comment>
<comment type="catalytic activity">
    <reaction evidence="1">
        <text>IMP + L-aspartate + GTP = N(6)-(1,2-dicarboxyethyl)-AMP + GDP + phosphate + 2 H(+)</text>
        <dbReference type="Rhea" id="RHEA:15753"/>
        <dbReference type="ChEBI" id="CHEBI:15378"/>
        <dbReference type="ChEBI" id="CHEBI:29991"/>
        <dbReference type="ChEBI" id="CHEBI:37565"/>
        <dbReference type="ChEBI" id="CHEBI:43474"/>
        <dbReference type="ChEBI" id="CHEBI:57567"/>
        <dbReference type="ChEBI" id="CHEBI:58053"/>
        <dbReference type="ChEBI" id="CHEBI:58189"/>
        <dbReference type="EC" id="6.3.4.4"/>
    </reaction>
</comment>
<comment type="cofactor">
    <cofactor evidence="1">
        <name>Mg(2+)</name>
        <dbReference type="ChEBI" id="CHEBI:18420"/>
    </cofactor>
    <text evidence="1">Binds 1 Mg(2+) ion per subunit.</text>
</comment>
<comment type="pathway">
    <text evidence="1">Purine metabolism; AMP biosynthesis via de novo pathway; AMP from IMP: step 1/2.</text>
</comment>
<comment type="subunit">
    <text evidence="1">Homodimer.</text>
</comment>
<comment type="subcellular location">
    <subcellularLocation>
        <location evidence="1">Cytoplasm</location>
    </subcellularLocation>
</comment>
<comment type="similarity">
    <text evidence="1">Belongs to the adenylosuccinate synthetase family.</text>
</comment>
<reference key="1">
    <citation type="journal article" date="2002" name="Mol. Microbiol.">
        <title>Genome sequence of Streptococcus agalactiae, a pathogen causing invasive neonatal disease.</title>
        <authorList>
            <person name="Glaser P."/>
            <person name="Rusniok C."/>
            <person name="Buchrieser C."/>
            <person name="Chevalier F."/>
            <person name="Frangeul L."/>
            <person name="Msadek T."/>
            <person name="Zouine M."/>
            <person name="Couve E."/>
            <person name="Lalioui L."/>
            <person name="Poyart C."/>
            <person name="Trieu-Cuot P."/>
            <person name="Kunst F."/>
        </authorList>
    </citation>
    <scope>NUCLEOTIDE SEQUENCE [LARGE SCALE GENOMIC DNA]</scope>
    <source>
        <strain>NEM316</strain>
    </source>
</reference>
<keyword id="KW-0963">Cytoplasm</keyword>
<keyword id="KW-0342">GTP-binding</keyword>
<keyword id="KW-0436">Ligase</keyword>
<keyword id="KW-0460">Magnesium</keyword>
<keyword id="KW-0479">Metal-binding</keyword>
<keyword id="KW-0547">Nucleotide-binding</keyword>
<keyword id="KW-0658">Purine biosynthesis</keyword>
<evidence type="ECO:0000255" key="1">
    <source>
        <dbReference type="HAMAP-Rule" id="MF_00011"/>
    </source>
</evidence>
<name>PURA_STRA3</name>
<accession>P65885</accession>
<accession>Q8DXN2</accession>
<accession>Q8E3A2</accession>
<proteinExistence type="inferred from homology"/>
<dbReference type="EC" id="6.3.4.4" evidence="1"/>
<dbReference type="EMBL" id="AL766854">
    <property type="protein sequence ID" value="CAD47518.1"/>
    <property type="molecule type" value="Genomic_DNA"/>
</dbReference>
<dbReference type="RefSeq" id="WP_000205037.1">
    <property type="nucleotide sequence ID" value="NC_004368.1"/>
</dbReference>
<dbReference type="SMR" id="P65885"/>
<dbReference type="KEGG" id="san:purA"/>
<dbReference type="eggNOG" id="COG0104">
    <property type="taxonomic scope" value="Bacteria"/>
</dbReference>
<dbReference type="HOGENOM" id="CLU_029848_0_0_9"/>
<dbReference type="UniPathway" id="UPA00075">
    <property type="reaction ID" value="UER00335"/>
</dbReference>
<dbReference type="Proteomes" id="UP000000823">
    <property type="component" value="Chromosome"/>
</dbReference>
<dbReference type="GO" id="GO:0005737">
    <property type="term" value="C:cytoplasm"/>
    <property type="evidence" value="ECO:0007669"/>
    <property type="project" value="UniProtKB-SubCell"/>
</dbReference>
<dbReference type="GO" id="GO:0004019">
    <property type="term" value="F:adenylosuccinate synthase activity"/>
    <property type="evidence" value="ECO:0007669"/>
    <property type="project" value="UniProtKB-UniRule"/>
</dbReference>
<dbReference type="GO" id="GO:0005525">
    <property type="term" value="F:GTP binding"/>
    <property type="evidence" value="ECO:0007669"/>
    <property type="project" value="UniProtKB-UniRule"/>
</dbReference>
<dbReference type="GO" id="GO:0000287">
    <property type="term" value="F:magnesium ion binding"/>
    <property type="evidence" value="ECO:0007669"/>
    <property type="project" value="UniProtKB-UniRule"/>
</dbReference>
<dbReference type="GO" id="GO:0044208">
    <property type="term" value="P:'de novo' AMP biosynthetic process"/>
    <property type="evidence" value="ECO:0007669"/>
    <property type="project" value="UniProtKB-UniRule"/>
</dbReference>
<dbReference type="GO" id="GO:0046040">
    <property type="term" value="P:IMP metabolic process"/>
    <property type="evidence" value="ECO:0007669"/>
    <property type="project" value="TreeGrafter"/>
</dbReference>
<dbReference type="CDD" id="cd03108">
    <property type="entry name" value="AdSS"/>
    <property type="match status" value="1"/>
</dbReference>
<dbReference type="FunFam" id="1.10.300.10:FF:000001">
    <property type="entry name" value="Adenylosuccinate synthetase"/>
    <property type="match status" value="1"/>
</dbReference>
<dbReference type="FunFam" id="3.90.170.10:FF:000001">
    <property type="entry name" value="Adenylosuccinate synthetase"/>
    <property type="match status" value="1"/>
</dbReference>
<dbReference type="Gene3D" id="3.40.440.10">
    <property type="entry name" value="Adenylosuccinate Synthetase, subunit A, domain 1"/>
    <property type="match status" value="1"/>
</dbReference>
<dbReference type="Gene3D" id="1.10.300.10">
    <property type="entry name" value="Adenylosuccinate Synthetase, subunit A, domain 2"/>
    <property type="match status" value="1"/>
</dbReference>
<dbReference type="Gene3D" id="3.90.170.10">
    <property type="entry name" value="Adenylosuccinate Synthetase, subunit A, domain 3"/>
    <property type="match status" value="1"/>
</dbReference>
<dbReference type="HAMAP" id="MF_00011">
    <property type="entry name" value="Adenylosucc_synth"/>
    <property type="match status" value="1"/>
</dbReference>
<dbReference type="InterPro" id="IPR018220">
    <property type="entry name" value="Adenylosuccin_syn_GTP-bd"/>
</dbReference>
<dbReference type="InterPro" id="IPR033128">
    <property type="entry name" value="Adenylosuccin_syn_Lys_AS"/>
</dbReference>
<dbReference type="InterPro" id="IPR042109">
    <property type="entry name" value="Adenylosuccinate_synth_dom1"/>
</dbReference>
<dbReference type="InterPro" id="IPR042110">
    <property type="entry name" value="Adenylosuccinate_synth_dom2"/>
</dbReference>
<dbReference type="InterPro" id="IPR042111">
    <property type="entry name" value="Adenylosuccinate_synth_dom3"/>
</dbReference>
<dbReference type="InterPro" id="IPR001114">
    <property type="entry name" value="Adenylosuccinate_synthetase"/>
</dbReference>
<dbReference type="InterPro" id="IPR027417">
    <property type="entry name" value="P-loop_NTPase"/>
</dbReference>
<dbReference type="NCBIfam" id="NF002223">
    <property type="entry name" value="PRK01117.1"/>
    <property type="match status" value="1"/>
</dbReference>
<dbReference type="NCBIfam" id="TIGR00184">
    <property type="entry name" value="purA"/>
    <property type="match status" value="1"/>
</dbReference>
<dbReference type="PANTHER" id="PTHR11846">
    <property type="entry name" value="ADENYLOSUCCINATE SYNTHETASE"/>
    <property type="match status" value="1"/>
</dbReference>
<dbReference type="PANTHER" id="PTHR11846:SF0">
    <property type="entry name" value="ADENYLOSUCCINATE SYNTHETASE"/>
    <property type="match status" value="1"/>
</dbReference>
<dbReference type="Pfam" id="PF00709">
    <property type="entry name" value="Adenylsucc_synt"/>
    <property type="match status" value="1"/>
</dbReference>
<dbReference type="SMART" id="SM00788">
    <property type="entry name" value="Adenylsucc_synt"/>
    <property type="match status" value="1"/>
</dbReference>
<dbReference type="SUPFAM" id="SSF52540">
    <property type="entry name" value="P-loop containing nucleoside triphosphate hydrolases"/>
    <property type="match status" value="1"/>
</dbReference>
<dbReference type="PROSITE" id="PS01266">
    <property type="entry name" value="ADENYLOSUCCIN_SYN_1"/>
    <property type="match status" value="1"/>
</dbReference>
<dbReference type="PROSITE" id="PS00513">
    <property type="entry name" value="ADENYLOSUCCIN_SYN_2"/>
    <property type="match status" value="1"/>
</dbReference>
<organism>
    <name type="scientific">Streptococcus agalactiae serotype III (strain NEM316)</name>
    <dbReference type="NCBI Taxonomy" id="211110"/>
    <lineage>
        <taxon>Bacteria</taxon>
        <taxon>Bacillati</taxon>
        <taxon>Bacillota</taxon>
        <taxon>Bacilli</taxon>
        <taxon>Lactobacillales</taxon>
        <taxon>Streptococcaceae</taxon>
        <taxon>Streptococcus</taxon>
    </lineage>
</organism>
<feature type="chain" id="PRO_0000095234" description="Adenylosuccinate synthetase">
    <location>
        <begin position="1"/>
        <end position="430"/>
    </location>
</feature>
<feature type="active site" description="Proton acceptor" evidence="1">
    <location>
        <position position="13"/>
    </location>
</feature>
<feature type="active site" description="Proton donor" evidence="1">
    <location>
        <position position="41"/>
    </location>
</feature>
<feature type="binding site" evidence="1">
    <location>
        <begin position="12"/>
        <end position="18"/>
    </location>
    <ligand>
        <name>GTP</name>
        <dbReference type="ChEBI" id="CHEBI:37565"/>
    </ligand>
</feature>
<feature type="binding site" description="in other chain" evidence="1">
    <location>
        <begin position="13"/>
        <end position="16"/>
    </location>
    <ligand>
        <name>IMP</name>
        <dbReference type="ChEBI" id="CHEBI:58053"/>
        <note>ligand shared between dimeric partners</note>
    </ligand>
</feature>
<feature type="binding site" evidence="1">
    <location>
        <position position="13"/>
    </location>
    <ligand>
        <name>Mg(2+)</name>
        <dbReference type="ChEBI" id="CHEBI:18420"/>
    </ligand>
</feature>
<feature type="binding site" description="in other chain" evidence="1">
    <location>
        <begin position="38"/>
        <end position="41"/>
    </location>
    <ligand>
        <name>IMP</name>
        <dbReference type="ChEBI" id="CHEBI:58053"/>
        <note>ligand shared between dimeric partners</note>
    </ligand>
</feature>
<feature type="binding site" evidence="1">
    <location>
        <begin position="40"/>
        <end position="42"/>
    </location>
    <ligand>
        <name>GTP</name>
        <dbReference type="ChEBI" id="CHEBI:37565"/>
    </ligand>
</feature>
<feature type="binding site" evidence="1">
    <location>
        <position position="40"/>
    </location>
    <ligand>
        <name>Mg(2+)</name>
        <dbReference type="ChEBI" id="CHEBI:18420"/>
    </ligand>
</feature>
<feature type="binding site" description="in other chain" evidence="1">
    <location>
        <position position="128"/>
    </location>
    <ligand>
        <name>IMP</name>
        <dbReference type="ChEBI" id="CHEBI:58053"/>
        <note>ligand shared between dimeric partners</note>
    </ligand>
</feature>
<feature type="binding site" evidence="1">
    <location>
        <position position="142"/>
    </location>
    <ligand>
        <name>IMP</name>
        <dbReference type="ChEBI" id="CHEBI:58053"/>
        <note>ligand shared between dimeric partners</note>
    </ligand>
</feature>
<feature type="binding site" description="in other chain" evidence="1">
    <location>
        <position position="223"/>
    </location>
    <ligand>
        <name>IMP</name>
        <dbReference type="ChEBI" id="CHEBI:58053"/>
        <note>ligand shared between dimeric partners</note>
    </ligand>
</feature>
<feature type="binding site" description="in other chain" evidence="1">
    <location>
        <position position="238"/>
    </location>
    <ligand>
        <name>IMP</name>
        <dbReference type="ChEBI" id="CHEBI:58053"/>
        <note>ligand shared between dimeric partners</note>
    </ligand>
</feature>
<feature type="binding site" evidence="1">
    <location>
        <begin position="298"/>
        <end position="304"/>
    </location>
    <ligand>
        <name>substrate</name>
    </ligand>
</feature>
<feature type="binding site" description="in other chain" evidence="1">
    <location>
        <position position="302"/>
    </location>
    <ligand>
        <name>IMP</name>
        <dbReference type="ChEBI" id="CHEBI:58053"/>
        <note>ligand shared between dimeric partners</note>
    </ligand>
</feature>
<feature type="binding site" evidence="1">
    <location>
        <position position="304"/>
    </location>
    <ligand>
        <name>GTP</name>
        <dbReference type="ChEBI" id="CHEBI:37565"/>
    </ligand>
</feature>
<feature type="binding site" evidence="1">
    <location>
        <begin position="330"/>
        <end position="332"/>
    </location>
    <ligand>
        <name>GTP</name>
        <dbReference type="ChEBI" id="CHEBI:37565"/>
    </ligand>
</feature>
<feature type="binding site" evidence="1">
    <location>
        <begin position="412"/>
        <end position="414"/>
    </location>
    <ligand>
        <name>GTP</name>
        <dbReference type="ChEBI" id="CHEBI:37565"/>
    </ligand>
</feature>
<sequence>MTSVVVVGTQWGDEGKGKITDFLSADAEVIARYQGGDNAGHTIVIDNKKFKLHLIPSGIFFKEKISVIGNGVVVNPKSLVKELAYLHGEGVTTDNLRISDRAHVILPYHIKLDQLQEDAKGDNKIGTTIKGIGPAYMDKAARVGIRIADLLDREVFAERLKINLAEKNRLFEKMYDSTPLEFDDIFEEYYEYGQQIKQYVTDTSVILNDALDAGKRVLFEGAQGVMLDIDQGTYPFVTSSNPVAGGVTIGSGVGPSKINKVVGVCKAYTSRVGDGPFPTELFDEVGDRIREIGKEYGTTTGRPRRVGWFDSVVMRHSRRVSGITNLSLNSIDVLSGLDTVKICVAYDLDGKRIDYYPASLEQLKRCKPIYEELPGWSEDITACRSLDDLPENARNYVRRVGELVGVRISTFSVGPGREQTNILESVWSNI</sequence>
<gene>
    <name evidence="1" type="primary">purA</name>
    <name type="ordered locus">gbs1859</name>
</gene>
<protein>
    <recommendedName>
        <fullName evidence="1">Adenylosuccinate synthetase</fullName>
        <shortName evidence="1">AMPSase</shortName>
        <shortName evidence="1">AdSS</shortName>
        <ecNumber evidence="1">6.3.4.4</ecNumber>
    </recommendedName>
    <alternativeName>
        <fullName evidence="1">IMP--aspartate ligase</fullName>
    </alternativeName>
</protein>